<accession>Q9PDM9</accession>
<accession>Q93LI8</accession>
<sequence>MSNERTAQQSDIKQLISKGLEQGYLTYAEVNDHLPEDLVDPDQIEDIIGMINGMGIEVHEVAPDAETLLLNEGNTGNREVDDTAAEEAAAALSALDTEAGRTTDPVRMYMREMGTVELLTREGEIAIAKRIEEGLSEVQAALGVFPLSTELLLSEYELHKEGKRRLTEVVVGFNDLIEEDNSVTSSVDVTDESIVEVDEEDDDSVGNDEDAPTIGPDPAEVASRIESLSTEYAKFKKLYAKHGPEHKAVIKVREDVAAIFVTFKLSLPLTDLLVQQLQNMVNSVKDHERKVLHLATNVAKMPRKDFIRSWENNQTNLEWVEDAIKRKQKWSSALRDIKDQITAEQQASIDLEKANSLTLADIKEINRMMVYGEAKASKAKKEMVEANLRLVISIAKKYTNRGLQFLDLIQEGNIGLMKAVCKFEHRRGFKFSTYATWWIRQAITRSIADQARTIRIPVHMIETINKLNRISRQMLQQFGREATPEELAKEMDMPEDKIRKVMKIAKEPISMETPIGDDEDSHLGDFIEDPNVESPVDTTTNVNLSETVREVLAGLTPREAKVLRMRFGIDMNTDHTLEEVGKQFDVTRERIRQIEAKALRKLRHPSRSEQLRSFLDID</sequence>
<feature type="chain" id="PRO_0000093933" description="RNA polymerase sigma factor RpoD">
    <location>
        <begin position="1"/>
        <end position="618"/>
    </location>
</feature>
<feature type="DNA-binding region" description="H-T-H motif" evidence="1">
    <location>
        <begin position="577"/>
        <end position="596"/>
    </location>
</feature>
<feature type="region of interest" description="Disordered" evidence="2">
    <location>
        <begin position="197"/>
        <end position="217"/>
    </location>
</feature>
<feature type="region of interest" description="Sigma-70 factor domain-2" evidence="1">
    <location>
        <begin position="383"/>
        <end position="453"/>
    </location>
</feature>
<feature type="region of interest" description="Sigma-70 factor domain-3" evidence="1">
    <location>
        <begin position="462"/>
        <end position="538"/>
    </location>
</feature>
<feature type="region of interest" description="Sigma-70 factor domain-4" evidence="1">
    <location>
        <begin position="551"/>
        <end position="604"/>
    </location>
</feature>
<feature type="short sequence motif" description="Interaction with polymerase core subunit RpoC">
    <location>
        <begin position="407"/>
        <end position="410"/>
    </location>
</feature>
<feature type="compositionally biased region" description="Acidic residues" evidence="2">
    <location>
        <begin position="197"/>
        <end position="211"/>
    </location>
</feature>
<protein>
    <recommendedName>
        <fullName evidence="1">RNA polymerase sigma factor RpoD</fullName>
    </recommendedName>
    <alternativeName>
        <fullName evidence="1">Sigma-70</fullName>
    </alternativeName>
</protein>
<reference key="1">
    <citation type="journal article" date="2000" name="Nature">
        <title>The genome sequence of the plant pathogen Xylella fastidiosa.</title>
        <authorList>
            <person name="Simpson A.J.G."/>
            <person name="Reinach F.C."/>
            <person name="Arruda P."/>
            <person name="Abreu F.A."/>
            <person name="Acencio M."/>
            <person name="Alvarenga R."/>
            <person name="Alves L.M.C."/>
            <person name="Araya J.E."/>
            <person name="Baia G.S."/>
            <person name="Baptista C.S."/>
            <person name="Barros M.H."/>
            <person name="Bonaccorsi E.D."/>
            <person name="Bordin S."/>
            <person name="Bove J.M."/>
            <person name="Briones M.R.S."/>
            <person name="Bueno M.R.P."/>
            <person name="Camargo A.A."/>
            <person name="Camargo L.E.A."/>
            <person name="Carraro D.M."/>
            <person name="Carrer H."/>
            <person name="Colauto N.B."/>
            <person name="Colombo C."/>
            <person name="Costa F.F."/>
            <person name="Costa M.C.R."/>
            <person name="Costa-Neto C.M."/>
            <person name="Coutinho L.L."/>
            <person name="Cristofani M."/>
            <person name="Dias-Neto E."/>
            <person name="Docena C."/>
            <person name="El-Dorry H."/>
            <person name="Facincani A.P."/>
            <person name="Ferreira A.J.S."/>
            <person name="Ferreira V.C.A."/>
            <person name="Ferro J.A."/>
            <person name="Fraga J.S."/>
            <person name="Franca S.C."/>
            <person name="Franco M.C."/>
            <person name="Frohme M."/>
            <person name="Furlan L.R."/>
            <person name="Garnier M."/>
            <person name="Goldman G.H."/>
            <person name="Goldman M.H.S."/>
            <person name="Gomes S.L."/>
            <person name="Gruber A."/>
            <person name="Ho P.L."/>
            <person name="Hoheisel J.D."/>
            <person name="Junqueira M.L."/>
            <person name="Kemper E.L."/>
            <person name="Kitajima J.P."/>
            <person name="Krieger J.E."/>
            <person name="Kuramae E.E."/>
            <person name="Laigret F."/>
            <person name="Lambais M.R."/>
            <person name="Leite L.C.C."/>
            <person name="Lemos E.G.M."/>
            <person name="Lemos M.V.F."/>
            <person name="Lopes S.A."/>
            <person name="Lopes C.R."/>
            <person name="Machado J.A."/>
            <person name="Machado M.A."/>
            <person name="Madeira A.M.B.N."/>
            <person name="Madeira H.M.F."/>
            <person name="Marino C.L."/>
            <person name="Marques M.V."/>
            <person name="Martins E.A.L."/>
            <person name="Martins E.M.F."/>
            <person name="Matsukuma A.Y."/>
            <person name="Menck C.F.M."/>
            <person name="Miracca E.C."/>
            <person name="Miyaki C.Y."/>
            <person name="Monteiro-Vitorello C.B."/>
            <person name="Moon D.H."/>
            <person name="Nagai M.A."/>
            <person name="Nascimento A.L.T.O."/>
            <person name="Netto L.E.S."/>
            <person name="Nhani A. Jr."/>
            <person name="Nobrega F.G."/>
            <person name="Nunes L.R."/>
            <person name="Oliveira M.A."/>
            <person name="de Oliveira M.C."/>
            <person name="de Oliveira R.C."/>
            <person name="Palmieri D.A."/>
            <person name="Paris A."/>
            <person name="Peixoto B.R."/>
            <person name="Pereira G.A.G."/>
            <person name="Pereira H.A. Jr."/>
            <person name="Pesquero J.B."/>
            <person name="Quaggio R.B."/>
            <person name="Roberto P.G."/>
            <person name="Rodrigues V."/>
            <person name="de Rosa A.J.M."/>
            <person name="de Rosa V.E. Jr."/>
            <person name="de Sa R.G."/>
            <person name="Santelli R.V."/>
            <person name="Sawasaki H.E."/>
            <person name="da Silva A.C.R."/>
            <person name="da Silva A.M."/>
            <person name="da Silva F.R."/>
            <person name="Silva W.A. Jr."/>
            <person name="da Silveira J.F."/>
            <person name="Silvestri M.L.Z."/>
            <person name="Siqueira W.J."/>
            <person name="de Souza A.A."/>
            <person name="de Souza A.P."/>
            <person name="Terenzi M.F."/>
            <person name="Truffi D."/>
            <person name="Tsai S.M."/>
            <person name="Tsuhako M.H."/>
            <person name="Vallada H."/>
            <person name="Van Sluys M.A."/>
            <person name="Verjovski-Almeida S."/>
            <person name="Vettore A.L."/>
            <person name="Zago M.A."/>
            <person name="Zatz M."/>
            <person name="Meidanis J."/>
            <person name="Setubal J.C."/>
        </authorList>
    </citation>
    <scope>NUCLEOTIDE SEQUENCE [LARGE SCALE GENOMIC DNA]</scope>
    <source>
        <strain>9a5c</strain>
    </source>
</reference>
<reference key="2">
    <citation type="submission" date="2001-06" db="EMBL/GenBank/DDBJ databases">
        <title>Sequence of the genomic fragment of Xylella fastidosa amplified with the primers RST31/33.</title>
        <authorList>
            <person name="Wendland A."/>
            <person name="Camargo L.E."/>
        </authorList>
    </citation>
    <scope>NUCLEOTIDE SEQUENCE [GENOMIC DNA] OF 475-618</scope>
    <source>
        <strain>Citrus</strain>
    </source>
</reference>
<proteinExistence type="inferred from homology"/>
<evidence type="ECO:0000255" key="1">
    <source>
        <dbReference type="HAMAP-Rule" id="MF_00963"/>
    </source>
</evidence>
<evidence type="ECO:0000256" key="2">
    <source>
        <dbReference type="SAM" id="MobiDB-lite"/>
    </source>
</evidence>
<name>RPOD_XYLFA</name>
<organism>
    <name type="scientific">Xylella fastidiosa (strain 9a5c)</name>
    <dbReference type="NCBI Taxonomy" id="160492"/>
    <lineage>
        <taxon>Bacteria</taxon>
        <taxon>Pseudomonadati</taxon>
        <taxon>Pseudomonadota</taxon>
        <taxon>Gammaproteobacteria</taxon>
        <taxon>Lysobacterales</taxon>
        <taxon>Lysobacteraceae</taxon>
        <taxon>Xylella</taxon>
    </lineage>
</organism>
<keyword id="KW-0963">Cytoplasm</keyword>
<keyword id="KW-0238">DNA-binding</keyword>
<keyword id="KW-0731">Sigma factor</keyword>
<keyword id="KW-0804">Transcription</keyword>
<keyword id="KW-0805">Transcription regulation</keyword>
<gene>
    <name evidence="1" type="primary">rpoD</name>
    <name type="ordered locus">XF_1350</name>
</gene>
<dbReference type="EMBL" id="AE003849">
    <property type="protein sequence ID" value="AAF84159.1"/>
    <property type="molecule type" value="Genomic_DNA"/>
</dbReference>
<dbReference type="EMBL" id="AY039798">
    <property type="protein sequence ID" value="AAK73284.1"/>
    <property type="molecule type" value="Genomic_DNA"/>
</dbReference>
<dbReference type="PIR" id="E82691">
    <property type="entry name" value="E82691"/>
</dbReference>
<dbReference type="RefSeq" id="WP_010893854.1">
    <property type="nucleotide sequence ID" value="NC_002488.3"/>
</dbReference>
<dbReference type="SMR" id="Q9PDM9"/>
<dbReference type="STRING" id="160492.XF_1350"/>
<dbReference type="KEGG" id="xfa:XF_1350"/>
<dbReference type="eggNOG" id="COG0568">
    <property type="taxonomic scope" value="Bacteria"/>
</dbReference>
<dbReference type="HOGENOM" id="CLU_014793_7_0_6"/>
<dbReference type="Proteomes" id="UP000000812">
    <property type="component" value="Chromosome"/>
</dbReference>
<dbReference type="GO" id="GO:0005737">
    <property type="term" value="C:cytoplasm"/>
    <property type="evidence" value="ECO:0007669"/>
    <property type="project" value="UniProtKB-SubCell"/>
</dbReference>
<dbReference type="GO" id="GO:0003677">
    <property type="term" value="F:DNA binding"/>
    <property type="evidence" value="ECO:0007669"/>
    <property type="project" value="UniProtKB-UniRule"/>
</dbReference>
<dbReference type="GO" id="GO:0016987">
    <property type="term" value="F:sigma factor activity"/>
    <property type="evidence" value="ECO:0007669"/>
    <property type="project" value="UniProtKB-UniRule"/>
</dbReference>
<dbReference type="GO" id="GO:0006352">
    <property type="term" value="P:DNA-templated transcription initiation"/>
    <property type="evidence" value="ECO:0007669"/>
    <property type="project" value="UniProtKB-UniRule"/>
</dbReference>
<dbReference type="CDD" id="cd06171">
    <property type="entry name" value="Sigma70_r4"/>
    <property type="match status" value="1"/>
</dbReference>
<dbReference type="FunFam" id="1.10.220.120:FF:000001">
    <property type="entry name" value="RNA polymerase sigma factor RpoD"/>
    <property type="match status" value="1"/>
</dbReference>
<dbReference type="FunFam" id="1.10.601.10:FF:000002">
    <property type="entry name" value="RNA polymerase sigma factor RpoD"/>
    <property type="match status" value="1"/>
</dbReference>
<dbReference type="FunFam" id="1.10.10.10:FF:000002">
    <property type="entry name" value="RNA polymerase sigma factor SigA"/>
    <property type="match status" value="1"/>
</dbReference>
<dbReference type="FunFam" id="1.10.10.10:FF:000004">
    <property type="entry name" value="RNA polymerase sigma factor SigA"/>
    <property type="match status" value="1"/>
</dbReference>
<dbReference type="Gene3D" id="1.10.601.10">
    <property type="entry name" value="RNA Polymerase Primary Sigma Factor"/>
    <property type="match status" value="1"/>
</dbReference>
<dbReference type="Gene3D" id="1.10.220.120">
    <property type="entry name" value="Sigma-70 factor, region 1.1"/>
    <property type="match status" value="1"/>
</dbReference>
<dbReference type="Gene3D" id="1.10.10.10">
    <property type="entry name" value="Winged helix-like DNA-binding domain superfamily/Winged helix DNA-binding domain"/>
    <property type="match status" value="2"/>
</dbReference>
<dbReference type="HAMAP" id="MF_00963">
    <property type="entry name" value="Sigma70_RpoD_SigA"/>
    <property type="match status" value="1"/>
</dbReference>
<dbReference type="InterPro" id="IPR014284">
    <property type="entry name" value="RNA_pol_sigma-70_dom"/>
</dbReference>
<dbReference type="InterPro" id="IPR000943">
    <property type="entry name" value="RNA_pol_sigma70"/>
</dbReference>
<dbReference type="InterPro" id="IPR009042">
    <property type="entry name" value="RNA_pol_sigma70_r1_2"/>
</dbReference>
<dbReference type="InterPro" id="IPR007627">
    <property type="entry name" value="RNA_pol_sigma70_r2"/>
</dbReference>
<dbReference type="InterPro" id="IPR007624">
    <property type="entry name" value="RNA_pol_sigma70_r3"/>
</dbReference>
<dbReference type="InterPro" id="IPR007630">
    <property type="entry name" value="RNA_pol_sigma70_r4"/>
</dbReference>
<dbReference type="InterPro" id="IPR007631">
    <property type="entry name" value="RNA_pol_sigma_70_non-ess"/>
</dbReference>
<dbReference type="InterPro" id="IPR007127">
    <property type="entry name" value="RNA_pol_sigma_70_r1_1"/>
</dbReference>
<dbReference type="InterPro" id="IPR042189">
    <property type="entry name" value="RNA_pol_sigma_70_r1_1_sf"/>
</dbReference>
<dbReference type="InterPro" id="IPR013325">
    <property type="entry name" value="RNA_pol_sigma_r2"/>
</dbReference>
<dbReference type="InterPro" id="IPR013324">
    <property type="entry name" value="RNA_pol_sigma_r3/r4-like"/>
</dbReference>
<dbReference type="InterPro" id="IPR012760">
    <property type="entry name" value="RNA_pol_sigma_RpoD_C"/>
</dbReference>
<dbReference type="InterPro" id="IPR050239">
    <property type="entry name" value="Sigma-70_RNA_pol_init_factors"/>
</dbReference>
<dbReference type="InterPro" id="IPR028630">
    <property type="entry name" value="Sigma70_RpoD"/>
</dbReference>
<dbReference type="InterPro" id="IPR036388">
    <property type="entry name" value="WH-like_DNA-bd_sf"/>
</dbReference>
<dbReference type="NCBIfam" id="NF004208">
    <property type="entry name" value="PRK05658.1"/>
    <property type="match status" value="1"/>
</dbReference>
<dbReference type="NCBIfam" id="TIGR02393">
    <property type="entry name" value="RpoD_Cterm"/>
    <property type="match status" value="1"/>
</dbReference>
<dbReference type="NCBIfam" id="TIGR02937">
    <property type="entry name" value="sigma70-ECF"/>
    <property type="match status" value="1"/>
</dbReference>
<dbReference type="PANTHER" id="PTHR30603">
    <property type="entry name" value="RNA POLYMERASE SIGMA FACTOR RPO"/>
    <property type="match status" value="1"/>
</dbReference>
<dbReference type="PANTHER" id="PTHR30603:SF60">
    <property type="entry name" value="RNA POLYMERASE SIGMA FACTOR RPOD"/>
    <property type="match status" value="1"/>
</dbReference>
<dbReference type="Pfam" id="PF04546">
    <property type="entry name" value="Sigma70_ner"/>
    <property type="match status" value="1"/>
</dbReference>
<dbReference type="Pfam" id="PF03979">
    <property type="entry name" value="Sigma70_r1_1"/>
    <property type="match status" value="1"/>
</dbReference>
<dbReference type="Pfam" id="PF00140">
    <property type="entry name" value="Sigma70_r1_2"/>
    <property type="match status" value="1"/>
</dbReference>
<dbReference type="Pfam" id="PF04542">
    <property type="entry name" value="Sigma70_r2"/>
    <property type="match status" value="1"/>
</dbReference>
<dbReference type="Pfam" id="PF04539">
    <property type="entry name" value="Sigma70_r3"/>
    <property type="match status" value="1"/>
</dbReference>
<dbReference type="Pfam" id="PF04545">
    <property type="entry name" value="Sigma70_r4"/>
    <property type="match status" value="1"/>
</dbReference>
<dbReference type="PRINTS" id="PR00046">
    <property type="entry name" value="SIGMA70FCT"/>
</dbReference>
<dbReference type="SUPFAM" id="SSF88946">
    <property type="entry name" value="Sigma2 domain of RNA polymerase sigma factors"/>
    <property type="match status" value="1"/>
</dbReference>
<dbReference type="SUPFAM" id="SSF88659">
    <property type="entry name" value="Sigma3 and sigma4 domains of RNA polymerase sigma factors"/>
    <property type="match status" value="2"/>
</dbReference>
<dbReference type="PROSITE" id="PS00715">
    <property type="entry name" value="SIGMA70_1"/>
    <property type="match status" value="1"/>
</dbReference>
<dbReference type="PROSITE" id="PS00716">
    <property type="entry name" value="SIGMA70_2"/>
    <property type="match status" value="1"/>
</dbReference>
<comment type="function">
    <text evidence="1">Sigma factors are initiation factors that promote the attachment of RNA polymerase to specific initiation sites and are then released. This sigma factor is the primary sigma factor during exponential growth.</text>
</comment>
<comment type="subunit">
    <text evidence="1">Interacts transiently with the RNA polymerase catalytic core.</text>
</comment>
<comment type="subcellular location">
    <subcellularLocation>
        <location evidence="1">Cytoplasm</location>
    </subcellularLocation>
</comment>
<comment type="similarity">
    <text evidence="1">Belongs to the sigma-70 factor family. RpoD/SigA subfamily.</text>
</comment>